<comment type="catalytic activity">
    <reaction evidence="1">
        <text>5-amino-1-(5-phospho-D-ribosyl)imidazole-4-carboxylate + L-aspartate + ATP = (2S)-2-[5-amino-1-(5-phospho-beta-D-ribosyl)imidazole-4-carboxamido]succinate + ADP + phosphate + 2 H(+)</text>
        <dbReference type="Rhea" id="RHEA:22628"/>
        <dbReference type="ChEBI" id="CHEBI:15378"/>
        <dbReference type="ChEBI" id="CHEBI:29991"/>
        <dbReference type="ChEBI" id="CHEBI:30616"/>
        <dbReference type="ChEBI" id="CHEBI:43474"/>
        <dbReference type="ChEBI" id="CHEBI:58443"/>
        <dbReference type="ChEBI" id="CHEBI:77657"/>
        <dbReference type="ChEBI" id="CHEBI:456216"/>
        <dbReference type="EC" id="6.3.2.6"/>
    </reaction>
</comment>
<comment type="pathway">
    <text evidence="1">Purine metabolism; IMP biosynthesis via de novo pathway; 5-amino-1-(5-phospho-D-ribosyl)imidazole-4-carboxamide from 5-amino-1-(5-phospho-D-ribosyl)imidazole-4-carboxylate: step 1/2.</text>
</comment>
<comment type="similarity">
    <text evidence="1">Belongs to the SAICAR synthetase family.</text>
</comment>
<organism>
    <name type="scientific">Salmonella paratyphi A (strain AKU_12601)</name>
    <dbReference type="NCBI Taxonomy" id="554290"/>
    <lineage>
        <taxon>Bacteria</taxon>
        <taxon>Pseudomonadati</taxon>
        <taxon>Pseudomonadota</taxon>
        <taxon>Gammaproteobacteria</taxon>
        <taxon>Enterobacterales</taxon>
        <taxon>Enterobacteriaceae</taxon>
        <taxon>Salmonella</taxon>
    </lineage>
</organism>
<proteinExistence type="inferred from homology"/>
<feature type="chain" id="PRO_1000096014" description="Phosphoribosylaminoimidazole-succinocarboxamide synthase">
    <location>
        <begin position="1"/>
        <end position="237"/>
    </location>
</feature>
<keyword id="KW-0067">ATP-binding</keyword>
<keyword id="KW-0436">Ligase</keyword>
<keyword id="KW-0547">Nucleotide-binding</keyword>
<keyword id="KW-0658">Purine biosynthesis</keyword>
<evidence type="ECO:0000255" key="1">
    <source>
        <dbReference type="HAMAP-Rule" id="MF_00137"/>
    </source>
</evidence>
<reference key="1">
    <citation type="journal article" date="2009" name="BMC Genomics">
        <title>Pseudogene accumulation in the evolutionary histories of Salmonella enterica serovars Paratyphi A and Typhi.</title>
        <authorList>
            <person name="Holt K.E."/>
            <person name="Thomson N.R."/>
            <person name="Wain J."/>
            <person name="Langridge G.C."/>
            <person name="Hasan R."/>
            <person name="Bhutta Z.A."/>
            <person name="Quail M.A."/>
            <person name="Norbertczak H."/>
            <person name="Walker D."/>
            <person name="Simmonds M."/>
            <person name="White B."/>
            <person name="Bason N."/>
            <person name="Mungall K."/>
            <person name="Dougan G."/>
            <person name="Parkhill J."/>
        </authorList>
    </citation>
    <scope>NUCLEOTIDE SEQUENCE [LARGE SCALE GENOMIC DNA]</scope>
    <source>
        <strain>AKU_12601</strain>
    </source>
</reference>
<accession>B5BB18</accession>
<dbReference type="EC" id="6.3.2.6" evidence="1"/>
<dbReference type="EMBL" id="FM200053">
    <property type="protein sequence ID" value="CAR58480.1"/>
    <property type="molecule type" value="Genomic_DNA"/>
</dbReference>
<dbReference type="RefSeq" id="WP_001171630.1">
    <property type="nucleotide sequence ID" value="NC_011147.1"/>
</dbReference>
<dbReference type="SMR" id="B5BB18"/>
<dbReference type="KEGG" id="sek:SSPA0357"/>
<dbReference type="HOGENOM" id="CLU_061495_2_1_6"/>
<dbReference type="UniPathway" id="UPA00074">
    <property type="reaction ID" value="UER00131"/>
</dbReference>
<dbReference type="Proteomes" id="UP000001869">
    <property type="component" value="Chromosome"/>
</dbReference>
<dbReference type="GO" id="GO:0005829">
    <property type="term" value="C:cytosol"/>
    <property type="evidence" value="ECO:0007669"/>
    <property type="project" value="TreeGrafter"/>
</dbReference>
<dbReference type="GO" id="GO:0005524">
    <property type="term" value="F:ATP binding"/>
    <property type="evidence" value="ECO:0007669"/>
    <property type="project" value="UniProtKB-KW"/>
</dbReference>
<dbReference type="GO" id="GO:0004639">
    <property type="term" value="F:phosphoribosylaminoimidazolesuccinocarboxamide synthase activity"/>
    <property type="evidence" value="ECO:0007669"/>
    <property type="project" value="UniProtKB-UniRule"/>
</dbReference>
<dbReference type="GO" id="GO:0006189">
    <property type="term" value="P:'de novo' IMP biosynthetic process"/>
    <property type="evidence" value="ECO:0007669"/>
    <property type="project" value="UniProtKB-UniRule"/>
</dbReference>
<dbReference type="GO" id="GO:0009236">
    <property type="term" value="P:cobalamin biosynthetic process"/>
    <property type="evidence" value="ECO:0007669"/>
    <property type="project" value="InterPro"/>
</dbReference>
<dbReference type="CDD" id="cd01415">
    <property type="entry name" value="SAICAR_synt_PurC"/>
    <property type="match status" value="1"/>
</dbReference>
<dbReference type="FunFam" id="3.30.200.20:FF:000086">
    <property type="entry name" value="Phosphoribosylaminoimidazole-succinocarboxamide synthase"/>
    <property type="match status" value="1"/>
</dbReference>
<dbReference type="FunFam" id="3.30.470.20:FF:000006">
    <property type="entry name" value="Phosphoribosylaminoimidazole-succinocarboxamide synthase"/>
    <property type="match status" value="1"/>
</dbReference>
<dbReference type="Gene3D" id="3.30.470.20">
    <property type="entry name" value="ATP-grasp fold, B domain"/>
    <property type="match status" value="1"/>
</dbReference>
<dbReference type="Gene3D" id="3.30.200.20">
    <property type="entry name" value="Phosphorylase Kinase, domain 1"/>
    <property type="match status" value="1"/>
</dbReference>
<dbReference type="HAMAP" id="MF_00137">
    <property type="entry name" value="SAICAR_synth"/>
    <property type="match status" value="1"/>
</dbReference>
<dbReference type="InterPro" id="IPR028923">
    <property type="entry name" value="SAICAR_synt/ADE2_N"/>
</dbReference>
<dbReference type="InterPro" id="IPR033934">
    <property type="entry name" value="SAICAR_synt_PurC"/>
</dbReference>
<dbReference type="InterPro" id="IPR001636">
    <property type="entry name" value="SAICAR_synth"/>
</dbReference>
<dbReference type="InterPro" id="IPR050089">
    <property type="entry name" value="SAICAR_synthetase"/>
</dbReference>
<dbReference type="InterPro" id="IPR018236">
    <property type="entry name" value="SAICAR_synthetase_CS"/>
</dbReference>
<dbReference type="NCBIfam" id="TIGR00081">
    <property type="entry name" value="purC"/>
    <property type="match status" value="1"/>
</dbReference>
<dbReference type="PANTHER" id="PTHR43599">
    <property type="entry name" value="MULTIFUNCTIONAL PROTEIN ADE2"/>
    <property type="match status" value="1"/>
</dbReference>
<dbReference type="PANTHER" id="PTHR43599:SF3">
    <property type="entry name" value="SI:DKEY-6E2.2"/>
    <property type="match status" value="1"/>
</dbReference>
<dbReference type="Pfam" id="PF01259">
    <property type="entry name" value="SAICAR_synt"/>
    <property type="match status" value="1"/>
</dbReference>
<dbReference type="SUPFAM" id="SSF56104">
    <property type="entry name" value="SAICAR synthase-like"/>
    <property type="match status" value="1"/>
</dbReference>
<dbReference type="PROSITE" id="PS01057">
    <property type="entry name" value="SAICAR_SYNTHETASE_1"/>
    <property type="match status" value="1"/>
</dbReference>
<dbReference type="PROSITE" id="PS01058">
    <property type="entry name" value="SAICAR_SYNTHETASE_2"/>
    <property type="match status" value="1"/>
</dbReference>
<name>PUR7_SALPK</name>
<sequence length="237" mass="26908">MQKQAELYRGKAKTVYSTENPDLLVLEFRNDTSAGDGARIEQFDRKGMVNNKFNHFIMTKLAEAGIPTQMERLLSDTECLVKKLEMVPVECVVRNRAAGSLVKRLGVEEGMELNPPIFDLFLKNDALHDPMVNSSYCETFGWVSQENLARMKELTYKANDVLKKLFDDAGLILVDFKLEFGLYKGEVVLGDEFSPDGSRLWDKETLDKMDKDRFRQSLGGLIEAYEAVAHRLGVKLD</sequence>
<protein>
    <recommendedName>
        <fullName evidence="1">Phosphoribosylaminoimidazole-succinocarboxamide synthase</fullName>
        <ecNumber evidence="1">6.3.2.6</ecNumber>
    </recommendedName>
    <alternativeName>
        <fullName evidence="1">SAICAR synthetase</fullName>
    </alternativeName>
</protein>
<gene>
    <name evidence="1" type="primary">purC</name>
    <name type="ordered locus">SSPA0357</name>
</gene>